<gene>
    <name evidence="1" type="primary">nikR</name>
    <name type="ordered locus">ECDH10B_3655</name>
</gene>
<keyword id="KW-0238">DNA-binding</keyword>
<keyword id="KW-0479">Metal-binding</keyword>
<keyword id="KW-0533">Nickel</keyword>
<keyword id="KW-0678">Repressor</keyword>
<keyword id="KW-0804">Transcription</keyword>
<keyword id="KW-0805">Transcription regulation</keyword>
<evidence type="ECO:0000255" key="1">
    <source>
        <dbReference type="HAMAP-Rule" id="MF_00476"/>
    </source>
</evidence>
<dbReference type="EMBL" id="CP000948">
    <property type="protein sequence ID" value="ACB04537.1"/>
    <property type="molecule type" value="Genomic_DNA"/>
</dbReference>
<dbReference type="RefSeq" id="WP_001190062.1">
    <property type="nucleotide sequence ID" value="NC_010473.1"/>
</dbReference>
<dbReference type="SMR" id="B1X7T9"/>
<dbReference type="GeneID" id="93778510"/>
<dbReference type="KEGG" id="ecd:ECDH10B_3655"/>
<dbReference type="HOGENOM" id="CLU_113319_1_4_6"/>
<dbReference type="GO" id="GO:0003700">
    <property type="term" value="F:DNA-binding transcription factor activity"/>
    <property type="evidence" value="ECO:0007669"/>
    <property type="project" value="UniProtKB-UniRule"/>
</dbReference>
<dbReference type="GO" id="GO:0016151">
    <property type="term" value="F:nickel cation binding"/>
    <property type="evidence" value="ECO:0007669"/>
    <property type="project" value="UniProtKB-UniRule"/>
</dbReference>
<dbReference type="GO" id="GO:0043565">
    <property type="term" value="F:sequence-specific DNA binding"/>
    <property type="evidence" value="ECO:0007669"/>
    <property type="project" value="UniProtKB-ARBA"/>
</dbReference>
<dbReference type="GO" id="GO:0010045">
    <property type="term" value="P:response to nickel cation"/>
    <property type="evidence" value="ECO:0007669"/>
    <property type="project" value="InterPro"/>
</dbReference>
<dbReference type="CDD" id="cd22231">
    <property type="entry name" value="RHH_NikR_HicB-like"/>
    <property type="match status" value="1"/>
</dbReference>
<dbReference type="FunFam" id="1.10.1220.10:FF:000001">
    <property type="entry name" value="Nickel-responsive regulator"/>
    <property type="match status" value="1"/>
</dbReference>
<dbReference type="FunFam" id="3.30.70.1150:FF:000002">
    <property type="entry name" value="Nickel-responsive regulator"/>
    <property type="match status" value="1"/>
</dbReference>
<dbReference type="Gene3D" id="3.30.70.1150">
    <property type="entry name" value="ACT-like. Chain A, domain 2"/>
    <property type="match status" value="1"/>
</dbReference>
<dbReference type="Gene3D" id="1.10.1220.10">
    <property type="entry name" value="Met repressor-like"/>
    <property type="match status" value="1"/>
</dbReference>
<dbReference type="HAMAP" id="MF_00476">
    <property type="entry name" value="NikR"/>
    <property type="match status" value="1"/>
</dbReference>
<dbReference type="InterPro" id="IPR027271">
    <property type="entry name" value="Acetolactate_synth/TF_NikR_C"/>
</dbReference>
<dbReference type="InterPro" id="IPR045865">
    <property type="entry name" value="ACT-like_dom_sf"/>
</dbReference>
<dbReference type="InterPro" id="IPR013321">
    <property type="entry name" value="Arc_rbn_hlx_hlx"/>
</dbReference>
<dbReference type="InterPro" id="IPR002145">
    <property type="entry name" value="CopG"/>
</dbReference>
<dbReference type="InterPro" id="IPR050192">
    <property type="entry name" value="CopG/NikR_regulator"/>
</dbReference>
<dbReference type="InterPro" id="IPR022988">
    <property type="entry name" value="Ni_resp_reg_NikR"/>
</dbReference>
<dbReference type="InterPro" id="IPR014160">
    <property type="entry name" value="Nickel_NikR_proteobac"/>
</dbReference>
<dbReference type="InterPro" id="IPR010985">
    <property type="entry name" value="Ribbon_hlx_hlx"/>
</dbReference>
<dbReference type="InterPro" id="IPR014864">
    <property type="entry name" value="TF_NikR_Ni-bd_C"/>
</dbReference>
<dbReference type="NCBIfam" id="TIGR02793">
    <property type="entry name" value="nikR"/>
    <property type="match status" value="1"/>
</dbReference>
<dbReference type="NCBIfam" id="NF002815">
    <property type="entry name" value="PRK02967.1"/>
    <property type="match status" value="1"/>
</dbReference>
<dbReference type="NCBIfam" id="NF003381">
    <property type="entry name" value="PRK04460.1"/>
    <property type="match status" value="1"/>
</dbReference>
<dbReference type="PANTHER" id="PTHR34719">
    <property type="entry name" value="NICKEL-RESPONSIVE REGULATOR"/>
    <property type="match status" value="1"/>
</dbReference>
<dbReference type="PANTHER" id="PTHR34719:SF2">
    <property type="entry name" value="NICKEL-RESPONSIVE REGULATOR"/>
    <property type="match status" value="1"/>
</dbReference>
<dbReference type="Pfam" id="PF08753">
    <property type="entry name" value="NikR_C"/>
    <property type="match status" value="1"/>
</dbReference>
<dbReference type="Pfam" id="PF01402">
    <property type="entry name" value="RHH_1"/>
    <property type="match status" value="1"/>
</dbReference>
<dbReference type="SUPFAM" id="SSF55021">
    <property type="entry name" value="ACT-like"/>
    <property type="match status" value="1"/>
</dbReference>
<dbReference type="SUPFAM" id="SSF47598">
    <property type="entry name" value="Ribbon-helix-helix"/>
    <property type="match status" value="1"/>
</dbReference>
<sequence>MQRVTITLDDDLLETLDSLSQRRGYNNRSEAIRDILRSALAQEATQQHGTQGFAVLSYVYEHEKRDLASRIVSTQHHHHDLSVATLHVHINHDDCLEIAVLKGDMGDVQHFADDVIAQRGVRHGHLQCLPKED</sequence>
<feature type="chain" id="PRO_1000125820" description="Nickel-responsive regulator">
    <location>
        <begin position="1"/>
        <end position="133"/>
    </location>
</feature>
<feature type="binding site" evidence="1">
    <location>
        <position position="76"/>
    </location>
    <ligand>
        <name>Ni(2+)</name>
        <dbReference type="ChEBI" id="CHEBI:49786"/>
    </ligand>
</feature>
<feature type="binding site" evidence="1">
    <location>
        <position position="87"/>
    </location>
    <ligand>
        <name>Ni(2+)</name>
        <dbReference type="ChEBI" id="CHEBI:49786"/>
    </ligand>
</feature>
<feature type="binding site" evidence="1">
    <location>
        <position position="89"/>
    </location>
    <ligand>
        <name>Ni(2+)</name>
        <dbReference type="ChEBI" id="CHEBI:49786"/>
    </ligand>
</feature>
<feature type="binding site" evidence="1">
    <location>
        <position position="95"/>
    </location>
    <ligand>
        <name>Ni(2+)</name>
        <dbReference type="ChEBI" id="CHEBI:49786"/>
    </ligand>
</feature>
<accession>B1X7T9</accession>
<organism>
    <name type="scientific">Escherichia coli (strain K12 / DH10B)</name>
    <dbReference type="NCBI Taxonomy" id="316385"/>
    <lineage>
        <taxon>Bacteria</taxon>
        <taxon>Pseudomonadati</taxon>
        <taxon>Pseudomonadota</taxon>
        <taxon>Gammaproteobacteria</taxon>
        <taxon>Enterobacterales</taxon>
        <taxon>Enterobacteriaceae</taxon>
        <taxon>Escherichia</taxon>
    </lineage>
</organism>
<reference key="1">
    <citation type="journal article" date="2008" name="J. Bacteriol.">
        <title>The complete genome sequence of Escherichia coli DH10B: insights into the biology of a laboratory workhorse.</title>
        <authorList>
            <person name="Durfee T."/>
            <person name="Nelson R."/>
            <person name="Baldwin S."/>
            <person name="Plunkett G. III"/>
            <person name="Burland V."/>
            <person name="Mau B."/>
            <person name="Petrosino J.F."/>
            <person name="Qin X."/>
            <person name="Muzny D.M."/>
            <person name="Ayele M."/>
            <person name="Gibbs R.A."/>
            <person name="Csorgo B."/>
            <person name="Posfai G."/>
            <person name="Weinstock G.M."/>
            <person name="Blattner F.R."/>
        </authorList>
    </citation>
    <scope>NUCLEOTIDE SEQUENCE [LARGE SCALE GENOMIC DNA]</scope>
    <source>
        <strain>K12 / DH10B</strain>
    </source>
</reference>
<comment type="function">
    <text evidence="1">Transcriptional repressor of the nikABCDE operon. Is active in the presence of excessive concentrations of intracellular nickel.</text>
</comment>
<comment type="cofactor">
    <cofactor evidence="1">
        <name>Ni(2+)</name>
        <dbReference type="ChEBI" id="CHEBI:49786"/>
    </cofactor>
    <text evidence="1">Binds 1 nickel ion per subunit.</text>
</comment>
<comment type="subunit">
    <text evidence="1">Homotetramer.</text>
</comment>
<comment type="similarity">
    <text evidence="1">Belongs to the transcriptional regulatory CopG/NikR family.</text>
</comment>
<name>NIKR_ECODH</name>
<protein>
    <recommendedName>
        <fullName evidence="1">Nickel-responsive regulator</fullName>
    </recommendedName>
</protein>
<proteinExistence type="inferred from homology"/>